<protein>
    <recommendedName>
        <fullName evidence="1">Serine hydroxymethyltransferase</fullName>
        <shortName evidence="1">SHMT</shortName>
        <shortName evidence="1">Serine methylase</shortName>
        <ecNumber evidence="1">2.1.2.-</ecNumber>
    </recommendedName>
</protein>
<feature type="chain" id="PRO_1000202273" description="Serine hydroxymethyltransferase">
    <location>
        <begin position="1"/>
        <end position="433"/>
    </location>
</feature>
<feature type="binding site" evidence="1">
    <location>
        <begin position="121"/>
        <end position="123"/>
    </location>
    <ligand>
        <name>(6S)-5,6,7,8-tetrahydrofolate</name>
        <dbReference type="ChEBI" id="CHEBI:57453"/>
    </ligand>
</feature>
<feature type="binding site" evidence="1">
    <location>
        <position position="243"/>
    </location>
    <ligand>
        <name>(6S)-5,6,7,8-tetrahydrofolate</name>
        <dbReference type="ChEBI" id="CHEBI:57453"/>
    </ligand>
</feature>
<feature type="site" description="Plays an important role in substrate specificity" evidence="1">
    <location>
        <position position="226"/>
    </location>
</feature>
<feature type="modified residue" description="N6-(pyridoxal phosphate)lysine" evidence="1">
    <location>
        <position position="227"/>
    </location>
</feature>
<evidence type="ECO:0000255" key="1">
    <source>
        <dbReference type="HAMAP-Rule" id="MF_00051"/>
    </source>
</evidence>
<name>GLYA_SACI2</name>
<accession>C3MQN2</accession>
<reference key="1">
    <citation type="journal article" date="2009" name="Proc. Natl. Acad. Sci. U.S.A.">
        <title>Biogeography of the Sulfolobus islandicus pan-genome.</title>
        <authorList>
            <person name="Reno M.L."/>
            <person name="Held N.L."/>
            <person name="Fields C.J."/>
            <person name="Burke P.V."/>
            <person name="Whitaker R.J."/>
        </authorList>
    </citation>
    <scope>NUCLEOTIDE SEQUENCE [LARGE SCALE GENOMIC DNA]</scope>
    <source>
        <strain>L.S.2.15 / Lassen #1</strain>
    </source>
</reference>
<proteinExistence type="inferred from homology"/>
<dbReference type="EC" id="2.1.2.-" evidence="1"/>
<dbReference type="EMBL" id="CP001399">
    <property type="protein sequence ID" value="ACP35695.1"/>
    <property type="molecule type" value="Genomic_DNA"/>
</dbReference>
<dbReference type="RefSeq" id="WP_012713831.1">
    <property type="nucleotide sequence ID" value="NC_012589.1"/>
</dbReference>
<dbReference type="SMR" id="C3MQN2"/>
<dbReference type="GeneID" id="7799326"/>
<dbReference type="KEGG" id="sis:LS215_1691"/>
<dbReference type="HOGENOM" id="CLU_022477_2_1_2"/>
<dbReference type="OrthoDB" id="5821at2157"/>
<dbReference type="UniPathway" id="UPA00288">
    <property type="reaction ID" value="UER01023"/>
</dbReference>
<dbReference type="Proteomes" id="UP000001747">
    <property type="component" value="Chromosome"/>
</dbReference>
<dbReference type="GO" id="GO:0005737">
    <property type="term" value="C:cytoplasm"/>
    <property type="evidence" value="ECO:0007669"/>
    <property type="project" value="UniProtKB-SubCell"/>
</dbReference>
<dbReference type="GO" id="GO:0004372">
    <property type="term" value="F:glycine hydroxymethyltransferase activity"/>
    <property type="evidence" value="ECO:0007669"/>
    <property type="project" value="UniProtKB-UniRule"/>
</dbReference>
<dbReference type="GO" id="GO:0030170">
    <property type="term" value="F:pyridoxal phosphate binding"/>
    <property type="evidence" value="ECO:0007669"/>
    <property type="project" value="UniProtKB-UniRule"/>
</dbReference>
<dbReference type="GO" id="GO:0019264">
    <property type="term" value="P:glycine biosynthetic process from serine"/>
    <property type="evidence" value="ECO:0007669"/>
    <property type="project" value="UniProtKB-UniRule"/>
</dbReference>
<dbReference type="GO" id="GO:0035999">
    <property type="term" value="P:tetrahydrofolate interconversion"/>
    <property type="evidence" value="ECO:0007669"/>
    <property type="project" value="InterPro"/>
</dbReference>
<dbReference type="CDD" id="cd00378">
    <property type="entry name" value="SHMT"/>
    <property type="match status" value="1"/>
</dbReference>
<dbReference type="FunFam" id="3.40.640.10:FF:000101">
    <property type="entry name" value="Serine hydroxymethyltransferase"/>
    <property type="match status" value="1"/>
</dbReference>
<dbReference type="FunFam" id="3.90.1150.10:FF:000136">
    <property type="entry name" value="Serine hydroxymethyltransferase"/>
    <property type="match status" value="1"/>
</dbReference>
<dbReference type="Gene3D" id="3.90.1150.10">
    <property type="entry name" value="Aspartate Aminotransferase, domain 1"/>
    <property type="match status" value="1"/>
</dbReference>
<dbReference type="Gene3D" id="3.40.640.10">
    <property type="entry name" value="Type I PLP-dependent aspartate aminotransferase-like (Major domain)"/>
    <property type="match status" value="1"/>
</dbReference>
<dbReference type="HAMAP" id="MF_00051">
    <property type="entry name" value="SHMT"/>
    <property type="match status" value="1"/>
</dbReference>
<dbReference type="InterPro" id="IPR015424">
    <property type="entry name" value="PyrdxlP-dep_Trfase"/>
</dbReference>
<dbReference type="InterPro" id="IPR015421">
    <property type="entry name" value="PyrdxlP-dep_Trfase_major"/>
</dbReference>
<dbReference type="InterPro" id="IPR015422">
    <property type="entry name" value="PyrdxlP-dep_Trfase_small"/>
</dbReference>
<dbReference type="InterPro" id="IPR001085">
    <property type="entry name" value="Ser_HO-MeTrfase"/>
</dbReference>
<dbReference type="InterPro" id="IPR049943">
    <property type="entry name" value="Ser_HO-MeTrfase-like"/>
</dbReference>
<dbReference type="InterPro" id="IPR019798">
    <property type="entry name" value="Ser_HO-MeTrfase_PLP_BS"/>
</dbReference>
<dbReference type="InterPro" id="IPR039429">
    <property type="entry name" value="SHMT-like_dom"/>
</dbReference>
<dbReference type="NCBIfam" id="NF000586">
    <property type="entry name" value="PRK00011.1"/>
    <property type="match status" value="1"/>
</dbReference>
<dbReference type="PANTHER" id="PTHR11680">
    <property type="entry name" value="SERINE HYDROXYMETHYLTRANSFERASE"/>
    <property type="match status" value="1"/>
</dbReference>
<dbReference type="PANTHER" id="PTHR11680:SF35">
    <property type="entry name" value="SERINE HYDROXYMETHYLTRANSFERASE 1"/>
    <property type="match status" value="1"/>
</dbReference>
<dbReference type="Pfam" id="PF00464">
    <property type="entry name" value="SHMT"/>
    <property type="match status" value="1"/>
</dbReference>
<dbReference type="PIRSF" id="PIRSF000412">
    <property type="entry name" value="SHMT"/>
    <property type="match status" value="1"/>
</dbReference>
<dbReference type="SUPFAM" id="SSF53383">
    <property type="entry name" value="PLP-dependent transferases"/>
    <property type="match status" value="1"/>
</dbReference>
<dbReference type="PROSITE" id="PS00096">
    <property type="entry name" value="SHMT"/>
    <property type="match status" value="1"/>
</dbReference>
<organism>
    <name type="scientific">Saccharolobus islandicus (strain L.S.2.15 / Lassen #1)</name>
    <name type="common">Sulfolobus islandicus</name>
    <dbReference type="NCBI Taxonomy" id="429572"/>
    <lineage>
        <taxon>Archaea</taxon>
        <taxon>Thermoproteota</taxon>
        <taxon>Thermoprotei</taxon>
        <taxon>Sulfolobales</taxon>
        <taxon>Sulfolobaceae</taxon>
        <taxon>Saccharolobus</taxon>
    </lineage>
</organism>
<comment type="function">
    <text evidence="1">Catalyzes the reversible interconversion of serine and glycine with a modified folate serving as the one-carbon carrier. Also exhibits a pteridine-independent aldolase activity toward beta-hydroxyamino acids, producing glycine and aldehydes, via a retro-aldol mechanism.</text>
</comment>
<comment type="cofactor">
    <cofactor evidence="1">
        <name>pyridoxal 5'-phosphate</name>
        <dbReference type="ChEBI" id="CHEBI:597326"/>
    </cofactor>
</comment>
<comment type="pathway">
    <text evidence="1">Amino-acid biosynthesis; glycine biosynthesis; glycine from L-serine: step 1/1.</text>
</comment>
<comment type="subunit">
    <text evidence="1">Homodimer.</text>
</comment>
<comment type="subcellular location">
    <subcellularLocation>
        <location evidence="1">Cytoplasm</location>
    </subcellularLocation>
</comment>
<comment type="similarity">
    <text evidence="1">Belongs to the SHMT family.</text>
</comment>
<gene>
    <name evidence="1" type="primary">glyA</name>
    <name type="ordered locus">LS215_1691</name>
</gene>
<keyword id="KW-0028">Amino-acid biosynthesis</keyword>
<keyword id="KW-0963">Cytoplasm</keyword>
<keyword id="KW-0554">One-carbon metabolism</keyword>
<keyword id="KW-0663">Pyridoxal phosphate</keyword>
<keyword id="KW-0808">Transferase</keyword>
<sequence>MSFPKELERVLEITKAQNVWRRTQTLNLIASENVMSPLAESVYMSDFMSRYAEGKPYKRYYQGTKYTDEIETLAMDLMNEITNSKDCDLRPTSGTIANAAVFRVLAEPGDKALIAPVQAGAHVSHTKFGTLGALGIQHIEMPFDEENINVDVDKAIKMIEEVKPKFVVLGGSLYLFPHPTKELAPHVHAVGAKLVYDAAHVYGLIEGKVWSSPLKEGADIMTVSTHKTFPGPQGGAIFSDGSEVFKQVSRTIFPWFVSNHHLHRLPATAVTAIEMKYFGESYANQITRNSKALAEALAERGFKVIGENLGYTKSHQVAVDVRQFGGGNKIAKLLEDANIIVNKNLLPYDKPENVSDPSGLRIGVQEMTRYGMKESEMEEIAELFKKVIIDKKDINEVKKEVIDMRKNFLEVKYTFDDMKDLEKYSSKSLKLII</sequence>